<gene>
    <name type="primary">ntmt1</name>
    <name type="synonym">mettl11a</name>
    <name type="ORF">zgc:77488</name>
</gene>
<reference key="1">
    <citation type="submission" date="2004-03" db="EMBL/GenBank/DDBJ databases">
        <authorList>
            <consortium name="NIH - Zebrafish Gene Collection (ZGC) project"/>
        </authorList>
    </citation>
    <scope>NUCLEOTIDE SEQUENCE [LARGE SCALE MRNA]</scope>
    <source>
        <tissue>Kidney</tissue>
    </source>
</reference>
<organism>
    <name type="scientific">Danio rerio</name>
    <name type="common">Zebrafish</name>
    <name type="synonym">Brachydanio rerio</name>
    <dbReference type="NCBI Taxonomy" id="7955"/>
    <lineage>
        <taxon>Eukaryota</taxon>
        <taxon>Metazoa</taxon>
        <taxon>Chordata</taxon>
        <taxon>Craniata</taxon>
        <taxon>Vertebrata</taxon>
        <taxon>Euteleostomi</taxon>
        <taxon>Actinopterygii</taxon>
        <taxon>Neopterygii</taxon>
        <taxon>Teleostei</taxon>
        <taxon>Ostariophysi</taxon>
        <taxon>Cypriniformes</taxon>
        <taxon>Danionidae</taxon>
        <taxon>Danioninae</taxon>
        <taxon>Danio</taxon>
    </lineage>
</organism>
<name>NTM1A_DANRE</name>
<evidence type="ECO:0000250" key="1">
    <source>
        <dbReference type="UniProtKB" id="Q9BV86"/>
    </source>
</evidence>
<evidence type="ECO:0000305" key="2"/>
<accession>Q6NWX7</accession>
<proteinExistence type="evidence at transcript level"/>
<comment type="function">
    <text evidence="1">Distributive alpha-N-methyltransferase that methylates the N-terminus of target proteins containing the N-terminal motif [Ala/Gly/Pro/Ser]-Pro-Lys when the initiator Met is cleaved. Specifically catalyzes mono-, di- or tri-methylation of the exposed alpha-amino group of the Ala, Gly or Ser residue in the [Ala/Gly/Ser]-Pro-Lys motif and mono- or di-methylation of Pro in the Pro-Pro-Lys motif. Required during mitosis for normal bipolar spindle formation and chromosome segregation via its action on target proteins.</text>
</comment>
<comment type="catalytic activity">
    <reaction evidence="1">
        <text>N-terminal L-alanyl-L-prolyl-L-lysyl-[protein] + 3 S-adenosyl-L-methionine = N-terminal N,N,N-trimethyl-L-alanyl-L-prolyl-L-lysyl-[protein] + 3 S-adenosyl-L-homocysteine + 3 H(+)</text>
        <dbReference type="Rhea" id="RHEA:54712"/>
        <dbReference type="Rhea" id="RHEA-COMP:13785"/>
        <dbReference type="Rhea" id="RHEA-COMP:13971"/>
        <dbReference type="ChEBI" id="CHEBI:15378"/>
        <dbReference type="ChEBI" id="CHEBI:57856"/>
        <dbReference type="ChEBI" id="CHEBI:59789"/>
        <dbReference type="ChEBI" id="CHEBI:138057"/>
        <dbReference type="ChEBI" id="CHEBI:138315"/>
        <dbReference type="EC" id="2.1.1.244"/>
    </reaction>
</comment>
<comment type="catalytic activity">
    <reaction evidence="1">
        <text>N-terminal L-seryl-L-prolyl-L-lysyl-[protein] + 3 S-adenosyl-L-methionine = N-terminal N,N,N-trimethyl-L-seryl-L-prolyl-L-lysyl-[protein] + 3 S-adenosyl-L-homocysteine + 3 H(+)</text>
        <dbReference type="Rhea" id="RHEA:54724"/>
        <dbReference type="Rhea" id="RHEA-COMP:13789"/>
        <dbReference type="Rhea" id="RHEA-COMP:13973"/>
        <dbReference type="ChEBI" id="CHEBI:15378"/>
        <dbReference type="ChEBI" id="CHEBI:57856"/>
        <dbReference type="ChEBI" id="CHEBI:59789"/>
        <dbReference type="ChEBI" id="CHEBI:138061"/>
        <dbReference type="ChEBI" id="CHEBI:138317"/>
        <dbReference type="EC" id="2.1.1.244"/>
    </reaction>
</comment>
<comment type="catalytic activity">
    <reaction evidence="1">
        <text>N-terminal L-prolyl-L-prolyl-L-lysyl-[protein] + 2 S-adenosyl-L-methionine = N-terminal N,N-dimethyl-L-prolyl-L-prolyl-L-lysyl-[protein] + 2 S-adenosyl-L-homocysteine + 2 H(+)</text>
        <dbReference type="Rhea" id="RHEA:54736"/>
        <dbReference type="Rhea" id="RHEA-COMP:13787"/>
        <dbReference type="Rhea" id="RHEA-COMP:13974"/>
        <dbReference type="ChEBI" id="CHEBI:15378"/>
        <dbReference type="ChEBI" id="CHEBI:57856"/>
        <dbReference type="ChEBI" id="CHEBI:59789"/>
        <dbReference type="ChEBI" id="CHEBI:138059"/>
        <dbReference type="ChEBI" id="CHEBI:138318"/>
        <dbReference type="EC" id="2.1.1.244"/>
    </reaction>
</comment>
<comment type="subcellular location">
    <subcellularLocation>
        <location evidence="1">Nucleus</location>
    </subcellularLocation>
    <text evidence="1">Predominantly nuclear.</text>
</comment>
<comment type="similarity">
    <text evidence="2">Belongs to the methyltransferase superfamily. NTM1 family.</text>
</comment>
<feature type="chain" id="PRO_0000399775" description="N-terminal Xaa-Pro-Lys N-methyltransferase 1">
    <location>
        <begin position="1"/>
        <end position="223"/>
    </location>
</feature>
<feature type="binding site" evidence="1">
    <location>
        <position position="69"/>
    </location>
    <ligand>
        <name>S-adenosyl-L-methionine</name>
        <dbReference type="ChEBI" id="CHEBI:59789"/>
    </ligand>
</feature>
<feature type="binding site" evidence="1">
    <location>
        <position position="74"/>
    </location>
    <ligand>
        <name>S-adenosyl-L-methionine</name>
        <dbReference type="ChEBI" id="CHEBI:59789"/>
    </ligand>
</feature>
<feature type="binding site" evidence="1">
    <location>
        <begin position="91"/>
        <end position="93"/>
    </location>
    <ligand>
        <name>S-adenosyl-L-methionine</name>
        <dbReference type="ChEBI" id="CHEBI:59789"/>
    </ligand>
</feature>
<feature type="binding site" evidence="1">
    <location>
        <begin position="119"/>
        <end position="120"/>
    </location>
    <ligand>
        <name>S-adenosyl-L-methionine</name>
        <dbReference type="ChEBI" id="CHEBI:59789"/>
    </ligand>
</feature>
<feature type="binding site" evidence="1">
    <location>
        <position position="135"/>
    </location>
    <ligand>
        <name>S-adenosyl-L-methionine</name>
        <dbReference type="ChEBI" id="CHEBI:59789"/>
    </ligand>
</feature>
<sequence>MEDCLIEDQTSFYSEAEHYWKDVPPTVDGMLGGYGSISSIDINGSKKFLQKFLGEGQGKTGTGCALDCGAGIGRITKRLLLPLFRTVDLVDVTQEFLDKARTYLGEESKRVENYFCCGLQDFQPQPERYDVIWIQWVIGHLTDDHLVEFLRRCRSGLRPEGLIVVKDNVAYEGVIPDDVDSSVCRDLNVLHRLVARAGLSIIYEEQQQNFPEEIYQVHALALR</sequence>
<protein>
    <recommendedName>
        <fullName>N-terminal Xaa-Pro-Lys N-methyltransferase 1</fullName>
        <ecNumber>2.1.1.244</ecNumber>
    </recommendedName>
    <alternativeName>
        <fullName>Alpha N-terminal protein methyltransferase 1A</fullName>
    </alternativeName>
    <alternativeName>
        <fullName>Methyltransferase-like protein 11A</fullName>
    </alternativeName>
    <alternativeName>
        <fullName>X-Pro-Lys N-terminal protein methyltransferase 1A</fullName>
        <shortName>NTM1A</shortName>
    </alternativeName>
</protein>
<keyword id="KW-0489">Methyltransferase</keyword>
<keyword id="KW-0539">Nucleus</keyword>
<keyword id="KW-1185">Reference proteome</keyword>
<keyword id="KW-0949">S-adenosyl-L-methionine</keyword>
<keyword id="KW-0808">Transferase</keyword>
<dbReference type="EC" id="2.1.1.244"/>
<dbReference type="EMBL" id="BC067378">
    <property type="protein sequence ID" value="AAH67378.1"/>
    <property type="molecule type" value="mRNA"/>
</dbReference>
<dbReference type="RefSeq" id="NP_998063.1">
    <property type="nucleotide sequence ID" value="NM_212898.1"/>
</dbReference>
<dbReference type="SMR" id="Q6NWX7"/>
<dbReference type="FunCoup" id="Q6NWX7">
    <property type="interactions" value="2174"/>
</dbReference>
<dbReference type="STRING" id="7955.ENSDARP00000145690"/>
<dbReference type="PaxDb" id="7955-ENSDARP00000033698"/>
<dbReference type="GeneID" id="405834"/>
<dbReference type="KEGG" id="dre:405834"/>
<dbReference type="AGR" id="ZFIN:ZDB-GENE-040426-2055"/>
<dbReference type="CTD" id="28989"/>
<dbReference type="ZFIN" id="ZDB-GENE-040426-2055">
    <property type="gene designation" value="ntmt1"/>
</dbReference>
<dbReference type="eggNOG" id="KOG3178">
    <property type="taxonomic scope" value="Eukaryota"/>
</dbReference>
<dbReference type="InParanoid" id="Q6NWX7"/>
<dbReference type="OrthoDB" id="1298661at2759"/>
<dbReference type="PhylomeDB" id="Q6NWX7"/>
<dbReference type="PRO" id="PR:Q6NWX7"/>
<dbReference type="Proteomes" id="UP000000437">
    <property type="component" value="Alternate scaffold 5"/>
</dbReference>
<dbReference type="Proteomes" id="UP000000437">
    <property type="component" value="Chromosome 5"/>
</dbReference>
<dbReference type="GO" id="GO:0005737">
    <property type="term" value="C:cytoplasm"/>
    <property type="evidence" value="ECO:0000318"/>
    <property type="project" value="GO_Central"/>
</dbReference>
<dbReference type="GO" id="GO:0005634">
    <property type="term" value="C:nucleus"/>
    <property type="evidence" value="ECO:0000250"/>
    <property type="project" value="UniProtKB"/>
</dbReference>
<dbReference type="GO" id="GO:0042054">
    <property type="term" value="F:histone methyltransferase activity"/>
    <property type="evidence" value="ECO:0000250"/>
    <property type="project" value="UniProtKB"/>
</dbReference>
<dbReference type="GO" id="GO:0071885">
    <property type="term" value="F:N-terminal protein N-methyltransferase activity"/>
    <property type="evidence" value="ECO:0000250"/>
    <property type="project" value="UniProtKB"/>
</dbReference>
<dbReference type="GO" id="GO:0008276">
    <property type="term" value="F:protein methyltransferase activity"/>
    <property type="evidence" value="ECO:0000250"/>
    <property type="project" value="UniProtKB"/>
</dbReference>
<dbReference type="GO" id="GO:0007059">
    <property type="term" value="P:chromosome segregation"/>
    <property type="evidence" value="ECO:0000250"/>
    <property type="project" value="UniProtKB"/>
</dbReference>
<dbReference type="GO" id="GO:0018013">
    <property type="term" value="P:N-terminal peptidyl-glycine methylation"/>
    <property type="evidence" value="ECO:0000250"/>
    <property type="project" value="UniProtKB"/>
</dbReference>
<dbReference type="GO" id="GO:0018016">
    <property type="term" value="P:N-terminal peptidyl-proline dimethylation"/>
    <property type="evidence" value="ECO:0000250"/>
    <property type="project" value="UniProtKB"/>
</dbReference>
<dbReference type="GO" id="GO:0035572">
    <property type="term" value="P:N-terminal peptidyl-serine dimethylation"/>
    <property type="evidence" value="ECO:0000250"/>
    <property type="project" value="UniProtKB"/>
</dbReference>
<dbReference type="GO" id="GO:0035573">
    <property type="term" value="P:N-terminal peptidyl-serine trimethylation"/>
    <property type="evidence" value="ECO:0000250"/>
    <property type="project" value="UniProtKB"/>
</dbReference>
<dbReference type="GO" id="GO:0007051">
    <property type="term" value="P:spindle organization"/>
    <property type="evidence" value="ECO:0000250"/>
    <property type="project" value="UniProtKB"/>
</dbReference>
<dbReference type="CDD" id="cd02440">
    <property type="entry name" value="AdoMet_MTases"/>
    <property type="match status" value="1"/>
</dbReference>
<dbReference type="FunFam" id="3.40.50.150:FF:000025">
    <property type="entry name" value="N-terminal Xaa-Pro-Lys N-methyltransferase 1"/>
    <property type="match status" value="1"/>
</dbReference>
<dbReference type="Gene3D" id="3.40.50.150">
    <property type="entry name" value="Vaccinia Virus protein VP39"/>
    <property type="match status" value="1"/>
</dbReference>
<dbReference type="InterPro" id="IPR008576">
    <property type="entry name" value="MeTrfase_NTM1"/>
</dbReference>
<dbReference type="InterPro" id="IPR029063">
    <property type="entry name" value="SAM-dependent_MTases_sf"/>
</dbReference>
<dbReference type="PANTHER" id="PTHR12753">
    <property type="entry name" value="AD-003 - RELATED"/>
    <property type="match status" value="1"/>
</dbReference>
<dbReference type="PANTHER" id="PTHR12753:SF1">
    <property type="entry name" value="N-TERMINAL XAA-PRO-LYS N-METHYLTRANSFERASE 1"/>
    <property type="match status" value="1"/>
</dbReference>
<dbReference type="Pfam" id="PF05891">
    <property type="entry name" value="Methyltransf_PK"/>
    <property type="match status" value="1"/>
</dbReference>
<dbReference type="PIRSF" id="PIRSF016958">
    <property type="entry name" value="DUF858_MeTrfase_lik"/>
    <property type="match status" value="1"/>
</dbReference>
<dbReference type="SUPFAM" id="SSF53335">
    <property type="entry name" value="S-adenosyl-L-methionine-dependent methyltransferases"/>
    <property type="match status" value="1"/>
</dbReference>